<dbReference type="EC" id="2.4.1.253"/>
<dbReference type="EMBL" id="AB042277">
    <property type="protein sequence ID" value="BAC98300.1"/>
    <property type="molecule type" value="mRNA"/>
</dbReference>
<dbReference type="SMR" id="Q76MR7"/>
<dbReference type="CAZy" id="GT1">
    <property type="family name" value="Glycosyltransferase Family 1"/>
</dbReference>
<dbReference type="KEGG" id="ag:BAC98300"/>
<dbReference type="BRENDA" id="2.4.1.253">
    <property type="organism ID" value="5639"/>
</dbReference>
<dbReference type="SABIO-RK" id="Q76MR7"/>
<dbReference type="GO" id="GO:0102159">
    <property type="term" value="F:baicalein 7-O-glucuronosyltransferase activity"/>
    <property type="evidence" value="ECO:0007669"/>
    <property type="project" value="RHEA"/>
</dbReference>
<dbReference type="GO" id="GO:0035251">
    <property type="term" value="F:UDP-glucosyltransferase activity"/>
    <property type="evidence" value="ECO:0007669"/>
    <property type="project" value="InterPro"/>
</dbReference>
<dbReference type="CDD" id="cd03784">
    <property type="entry name" value="GT1_Gtf-like"/>
    <property type="match status" value="1"/>
</dbReference>
<dbReference type="FunFam" id="3.40.50.2000:FF:000020">
    <property type="entry name" value="Glycosyltransferase"/>
    <property type="match status" value="1"/>
</dbReference>
<dbReference type="Gene3D" id="3.40.50.2000">
    <property type="entry name" value="Glycogen Phosphorylase B"/>
    <property type="match status" value="2"/>
</dbReference>
<dbReference type="InterPro" id="IPR050481">
    <property type="entry name" value="UDP-glycosyltransf_plant"/>
</dbReference>
<dbReference type="InterPro" id="IPR002213">
    <property type="entry name" value="UDP_glucos_trans"/>
</dbReference>
<dbReference type="PANTHER" id="PTHR48048">
    <property type="entry name" value="GLYCOSYLTRANSFERASE"/>
    <property type="match status" value="1"/>
</dbReference>
<dbReference type="PANTHER" id="PTHR48048:SF30">
    <property type="entry name" value="GLYCOSYLTRANSFERASE"/>
    <property type="match status" value="1"/>
</dbReference>
<dbReference type="Pfam" id="PF00201">
    <property type="entry name" value="UDPGT"/>
    <property type="match status" value="1"/>
</dbReference>
<dbReference type="SUPFAM" id="SSF53756">
    <property type="entry name" value="UDP-Glycosyltransferase/glycogen phosphorylase"/>
    <property type="match status" value="1"/>
</dbReference>
<evidence type="ECO:0000269" key="1">
    <source>
    </source>
</evidence>
<evidence type="ECO:0000305" key="2"/>
<protein>
    <recommendedName>
        <fullName>Baicalein 7-O-glucuronosyltransferase</fullName>
        <ecNumber>2.4.1.253</ecNumber>
    </recommendedName>
    <alternativeName>
        <fullName>UDP-glucuronate:baicalein 7-O-glucuronosyltransferase</fullName>
    </alternativeName>
</protein>
<comment type="function">
    <text evidence="1">Involved in the production of glucuronosylated baicalein, a flavonoid that shows antiallergic, anti-HIV and antitumor activities. Can use baicalein, scutellarein and wogonin as substrates, but not chrysin, apigenin, luteolin, quercetin, formononetin and daidzein. Highly specific for UDP-glucuronate (UDP-GlcUA) and no activity with UDP-glucose or UDP-galacturonic acid.</text>
</comment>
<comment type="catalytic activity">
    <reaction evidence="1">
        <text>baicalein + UDP-alpha-D-glucuronate = baicalin + UDP</text>
        <dbReference type="Rhea" id="RHEA:28314"/>
        <dbReference type="ChEBI" id="CHEBI:58052"/>
        <dbReference type="ChEBI" id="CHEBI:58223"/>
        <dbReference type="ChEBI" id="CHEBI:61283"/>
        <dbReference type="ChEBI" id="CHEBI:78324"/>
        <dbReference type="EC" id="2.4.1.253"/>
    </reaction>
</comment>
<comment type="activity regulation">
    <text evidence="1">Inhibited by copper, zinc and iron, p-Chloromercuri-benzoic acid (PCMBA) and 4,4'-diisothiocyanostilbene-2,2'-disulfonic acid (DIDS), but not by N-ethylmaleimide (NEM), dithioerythritol (DTE), calcium or magnesium.</text>
</comment>
<comment type="biophysicochemical properties">
    <kinetics>
        <KM evidence="1">52.4 uM for baicalein</KM>
        <KM evidence="1">109 uM for scutellarein</KM>
        <KM evidence="1">106.5 uM for wogonin</KM>
        <KM evidence="1">72.9 uM for UDP-glucuronic acid</KM>
        <Vmax evidence="1">257.0 nmol/sec/mg enzyme with baicalein as substrate</Vmax>
        <Vmax evidence="1">290.0 nmol/sec/mg enzyme with scutellarein as substrate</Vmax>
        <Vmax evidence="1">182.0 nmol/sec/mg enzyme with wogonin as substrate</Vmax>
    </kinetics>
    <phDependence>
        <text evidence="1">Optimum pH is 7.5.</text>
    </phDependence>
    <temperatureDependence>
        <text evidence="1">Optimum temperature is 30-40 degrees Celsius.</text>
    </temperatureDependence>
</comment>
<comment type="subunit">
    <text evidence="1">Homodimer.</text>
</comment>
<comment type="similarity">
    <text evidence="2">Belongs to the UDP-glycosyltransferase family.</text>
</comment>
<proteinExistence type="evidence at protein level"/>
<reference key="1">
    <citation type="submission" date="2000-04" db="EMBL/GenBank/DDBJ databases">
        <title>Cloning and Expression of cDNA encoding UDP-glucuronate:baicalein 7-O-glucuronosyltransferase from suspension culture of Scutellaria baicalensis Georgi.</title>
        <authorList>
            <person name="Nagashima S."/>
            <person name="Hirotani M."/>
            <person name="Yoshikawa T."/>
        </authorList>
    </citation>
    <scope>NUCLEOTIDE SEQUENCE [MRNA]</scope>
</reference>
<reference key="2">
    <citation type="journal article" date="2000" name="Phytochemistry">
        <title>Purification and characterization of UDP-glucuronate: baicalein 7-O-glucuronosyltransferase from Scutellaria baicalensis Georgi. cell suspension cultures.</title>
        <authorList>
            <person name="Nagashima S."/>
            <person name="Hirotani M."/>
            <person name="Yoshikawa T."/>
        </authorList>
    </citation>
    <scope>FUNCTION</scope>
    <scope>CATALYTIC ACTIVITY</scope>
    <scope>BIOPHYSICOCHEMICAL PROPERTIES</scope>
    <scope>ACTIVITY REGULATION</scope>
    <scope>SUBUNIT</scope>
</reference>
<name>UBGAT_SCUBA</name>
<gene>
    <name type="primary">UBGAT-I</name>
</gene>
<organism>
    <name type="scientific">Scutellaria baicalensis</name>
    <name type="common">Baical skullcap</name>
    <dbReference type="NCBI Taxonomy" id="65409"/>
    <lineage>
        <taxon>Eukaryota</taxon>
        <taxon>Viridiplantae</taxon>
        <taxon>Streptophyta</taxon>
        <taxon>Embryophyta</taxon>
        <taxon>Tracheophyta</taxon>
        <taxon>Spermatophyta</taxon>
        <taxon>Magnoliopsida</taxon>
        <taxon>eudicotyledons</taxon>
        <taxon>Gunneridae</taxon>
        <taxon>Pentapetalae</taxon>
        <taxon>asterids</taxon>
        <taxon>lamiids</taxon>
        <taxon>Lamiales</taxon>
        <taxon>Lamiaceae</taxon>
        <taxon>Scutellarioideae</taxon>
        <taxon>Scutellaria</taxon>
    </lineage>
</organism>
<accession>Q76MR7</accession>
<feature type="chain" id="PRO_0000412108" description="Baicalein 7-O-glucuronosyltransferase">
    <location>
        <begin position="1"/>
        <end position="441"/>
    </location>
</feature>
<sequence length="441" mass="48654">MAVLAKFISKNHPSVPIIIISNAPESAAASVAAIPSISYHRLPLPEIPPDMTTDRVELFFELPRLSNPNLLTALQQISQKTRIRAVILDFFCNAAFEVPTSLNIPTYYYFSAGTPTAILTLYFETIDETIPVDLQDLNDYVDIPGLPPIHCLDIPVALSPRKSLVYKSSVDISKNLRRSAGILVNGFDALEFRAIGSHSQRPMHFKGPTPPVYFIGPLVGDVDTKAGSEEHECLRWLDTQPSKSVVFLCFGRRGVFSAKQLKETAAALENSGHRFLWSVRNPPELKKATGSDEPDLDELLPEGFLERTKDRGFVIKSWAPQKEVLAHDSVGGFVTHCGRSSVSEGVWFGVPMIGWPVDAELRLNRAVMVDDLQVALPLEEEAGGFVTAAELEKRVRELMETKAGKAVRQRVTELKLSARAAVAENGSSLNDLKKFLHATRD</sequence>
<keyword id="KW-0328">Glycosyltransferase</keyword>
<keyword id="KW-0808">Transferase</keyword>